<protein>
    <recommendedName>
        <fullName>Protein P1-P2</fullName>
    </recommendedName>
    <component>
        <recommendedName>
            <fullName>Serine protease</fullName>
            <ecNumber>3.4.21.-</ecNumber>
        </recommendedName>
    </component>
    <component>
        <recommendedName>
            <fullName>RNA-directed RNA polymerase</fullName>
            <ecNumber>2.7.7.48</ecNumber>
        </recommendedName>
        <alternativeName>
            <fullName>69.6 kDa protein</fullName>
        </alternativeName>
    </component>
</protein>
<proteinExistence type="inferred from homology"/>
<reference key="1">
    <citation type="journal article" date="1989" name="FEBS Lett.">
        <title>Nucleotide sequence and organization of potato leafroll virus genomic RNA.</title>
        <authorList>
            <person name="van der Wilk F."/>
            <person name="Huisman M.J."/>
            <person name="Cornelissen B.J.C."/>
            <person name="Huttinga H."/>
            <person name="Goldbach R.W."/>
        </authorList>
    </citation>
    <scope>NUCLEOTIDE SEQUENCE [GENOMIC RNA]</scope>
</reference>
<comment type="function">
    <text evidence="6">Precursor from which the RNA-dependent RNA polymerase (RdRp) is probably released. RNA-dependent RNA polymerase plays an essential role in virus replication (Potential).</text>
</comment>
<comment type="catalytic activity">
    <reaction evidence="3">
        <text>RNA(n) + a ribonucleoside 5'-triphosphate = RNA(n+1) + diphosphate</text>
        <dbReference type="Rhea" id="RHEA:21248"/>
        <dbReference type="Rhea" id="RHEA-COMP:14527"/>
        <dbReference type="Rhea" id="RHEA-COMP:17342"/>
        <dbReference type="ChEBI" id="CHEBI:33019"/>
        <dbReference type="ChEBI" id="CHEBI:61557"/>
        <dbReference type="ChEBI" id="CHEBI:140395"/>
        <dbReference type="EC" id="2.7.7.48"/>
    </reaction>
</comment>
<comment type="subcellular location">
    <molecule>Protein P1-P2</molecule>
    <subcellularLocation>
        <location evidence="6">Membrane</location>
        <topology evidence="6">Multi-pass membrane protein</topology>
    </subcellularLocation>
</comment>
<comment type="alternative products">
    <event type="ribosomal frameshifting"/>
    <isoform>
        <id>P11623-1</id>
        <name>RNA-directed RNA polymerase</name>
        <sequence type="displayed"/>
    </isoform>
    <isoform>
        <id>P11622-1</id>
        <name>Protein P1</name>
        <sequence type="external"/>
    </isoform>
</comment>
<comment type="PTM">
    <text evidence="6">Specific enzymatic cleavages in vivo yield mature proteins. The protease probably cleaves itself and releases the RdRp (Potential). Cleavages have been shown in the P1 protein, but since the N-terminus containing the serine protease is shared between P1 and P1-P2, cleavages should also occur within the P1-P2 protein.</text>
</comment>
<comment type="miscellaneous">
    <molecule>Isoform RNA-directed RNA polymerase</molecule>
    <text>Produced by -1 ribosomal frameshifting between codons 487 and 488.</text>
</comment>
<comment type="sequence caution" evidence="6">
    <conflict type="miscellaneous discrepancy">
        <sequence resource="EMBL-CDS" id="CAA68796"/>
    </conflict>
    <text>Ribosomal frameshifting not described. Translation N-terminally extended.</text>
</comment>
<dbReference type="EC" id="3.4.21.-"/>
<dbReference type="EC" id="2.7.7.48"/>
<dbReference type="EMBL" id="Y07496">
    <property type="protein sequence ID" value="CAA68796.1"/>
    <property type="status" value="ALT_SEQ"/>
    <property type="molecule type" value="Genomic_RNA"/>
</dbReference>
<dbReference type="PIR" id="S03548">
    <property type="entry name" value="RRVQWA"/>
</dbReference>
<dbReference type="Proteomes" id="UP000000474">
    <property type="component" value="Genome"/>
</dbReference>
<dbReference type="GO" id="GO:0016020">
    <property type="term" value="C:membrane"/>
    <property type="evidence" value="ECO:0007669"/>
    <property type="project" value="UniProtKB-SubCell"/>
</dbReference>
<dbReference type="GO" id="GO:0000166">
    <property type="term" value="F:nucleotide binding"/>
    <property type="evidence" value="ECO:0007669"/>
    <property type="project" value="UniProtKB-KW"/>
</dbReference>
<dbReference type="GO" id="GO:0003723">
    <property type="term" value="F:RNA binding"/>
    <property type="evidence" value="ECO:0007669"/>
    <property type="project" value="InterPro"/>
</dbReference>
<dbReference type="GO" id="GO:0003968">
    <property type="term" value="F:RNA-directed RNA polymerase activity"/>
    <property type="evidence" value="ECO:0007669"/>
    <property type="project" value="UniProtKB-KW"/>
</dbReference>
<dbReference type="GO" id="GO:0004252">
    <property type="term" value="F:serine-type endopeptidase activity"/>
    <property type="evidence" value="ECO:0007669"/>
    <property type="project" value="InterPro"/>
</dbReference>
<dbReference type="GO" id="GO:0070008">
    <property type="term" value="F:serine-type exopeptidase activity"/>
    <property type="evidence" value="ECO:0007669"/>
    <property type="project" value="InterPro"/>
</dbReference>
<dbReference type="GO" id="GO:0006351">
    <property type="term" value="P:DNA-templated transcription"/>
    <property type="evidence" value="ECO:0007669"/>
    <property type="project" value="InterPro"/>
</dbReference>
<dbReference type="GO" id="GO:0006508">
    <property type="term" value="P:proteolysis"/>
    <property type="evidence" value="ECO:0007669"/>
    <property type="project" value="UniProtKB-KW"/>
</dbReference>
<dbReference type="GO" id="GO:0039694">
    <property type="term" value="P:viral RNA genome replication"/>
    <property type="evidence" value="ECO:0007669"/>
    <property type="project" value="InterPro"/>
</dbReference>
<dbReference type="GO" id="GO:0075523">
    <property type="term" value="P:viral translational frameshifting"/>
    <property type="evidence" value="ECO:0007669"/>
    <property type="project" value="UniProtKB-KW"/>
</dbReference>
<dbReference type="CDD" id="cd23180">
    <property type="entry name" value="ps-ssRNAv_Solemoviridae_RdRp"/>
    <property type="match status" value="1"/>
</dbReference>
<dbReference type="InterPro" id="IPR043502">
    <property type="entry name" value="DNA/RNA_pol_sf"/>
</dbReference>
<dbReference type="InterPro" id="IPR018019">
    <property type="entry name" value="Luteovirus_Orf2"/>
</dbReference>
<dbReference type="InterPro" id="IPR009003">
    <property type="entry name" value="Peptidase_S1_PA"/>
</dbReference>
<dbReference type="InterPro" id="IPR000382">
    <property type="entry name" value="Peptidase_S39B_luteovirus"/>
</dbReference>
<dbReference type="InterPro" id="IPR001795">
    <property type="entry name" value="RNA-dir_pol_luteovirus"/>
</dbReference>
<dbReference type="InterPro" id="IPR007094">
    <property type="entry name" value="RNA-dir_pol_PSvirus"/>
</dbReference>
<dbReference type="Pfam" id="PF02122">
    <property type="entry name" value="Peptidase_S39"/>
    <property type="match status" value="1"/>
</dbReference>
<dbReference type="Pfam" id="PF02123">
    <property type="entry name" value="RdRP_4"/>
    <property type="match status" value="1"/>
</dbReference>
<dbReference type="PRINTS" id="PR00913">
    <property type="entry name" value="LVIRUSORF2"/>
</dbReference>
<dbReference type="SUPFAM" id="SSF56672">
    <property type="entry name" value="DNA/RNA polymerases"/>
    <property type="match status" value="1"/>
</dbReference>
<dbReference type="SUPFAM" id="SSF50494">
    <property type="entry name" value="Trypsin-like serine proteases"/>
    <property type="match status" value="1"/>
</dbReference>
<dbReference type="PROSITE" id="PS51868">
    <property type="entry name" value="PEPTIDASE_S39"/>
    <property type="match status" value="1"/>
</dbReference>
<dbReference type="PROSITE" id="PS50507">
    <property type="entry name" value="RDRP_SSRNA_POS"/>
    <property type="match status" value="1"/>
</dbReference>
<organismHost>
    <name type="scientific">Solanum tuberosum</name>
    <name type="common">Potato</name>
    <dbReference type="NCBI Taxonomy" id="4113"/>
</organismHost>
<accession>P11623</accession>
<gene>
    <name type="ORF">ORF1/ORF2</name>
</gene>
<sequence>MNRFTAYAALFFIFSLCSTAKEAGFQHPAFNFRGTSTMSALSGDYSAAPTPLYKSWALPSSLNLTTQPPPLLTDRSYYELVQALISKMRLDCQTVGDMTWRHLSEMLFASWNSVKEVSLKAASVTLWAIISIWFGLYWTLARLITLFLWTFSIEALCLILLGCITSLIYKGALSLSEHLPVFLFMSPLKIIWRAAFSKRNYKNEKAVEGYKGFSVPQKPPKSAVIELQHENGSHLGYANCIRLYSGENALVTAEHCLEGAFATSLKTGNRIPMSTFFPIFKSARNDISILVGPPNWEGLLSVKGAHFITADKIGKGPASFYTLEKGEWMCHSATIDGAHHQFVSVLCNTGPGYSGTGFWSSKNLLGVLKGFPLEEECNYNVMSVIPSIPGITSPNYVFESTAVKGRVFSDETVKELEREASEAVKKLARFKSLTGKNWANDYDSDEDYGLEKEAATNAPAEKTAQTNSAEKTAPSTSAEKTAPTNKPFKWASGTARQNKRQLRHPRRRYKRTTNGQNGRTDHHSYGGENQSLGDRGEDSEQGVSESPAEAQTKQTRKTWREEQAKQFTSYFDAIYKWGAQEEGCPPGFRKCGNIPGYYHPRTKGETKWGQKLCQVHPELADKTAGFGWPKAGFEAELQSLNLQAARWLQRAESATIPGAEARKRVIEKTVEAYRNCITNAPLCSLKSKLDWAGFQQDIREAVQSLELDAGVGIPYIAYGLPTHRGWVEDHKLLPVLTQLTFDRLQKMSEASFEDMSAEELVQEGLCDPIRLFVKGEPHKQSKLDEGRYRLIMSVSLVDQLVARVLFQNQNKREISLWRSVPSKPGFGLSTDTQTAEFLECLQKVSGAPSVEELCANHKEHTRPTDCSGFDWSVAYWMLEDDMEVRNRLTFNNTQLTERLRAAWLKCIGNSVLCLSDGTLLAQTVPGVQKSGSYNTSSSNSRIRVMAAYHCGADWAMAMGDDALEAPNSDLEEYKTLGFKVEVGRELEFCSHIFRNPTLAVPVNTNKMLYKLIHGYNPECGNPEVIQNYLAAVFSVLQELRHDRELVAKLHQWLVPSATTKEH</sequence>
<feature type="signal peptide" evidence="2">
    <location>
        <begin position="1"/>
        <end position="20"/>
    </location>
</feature>
<feature type="chain" id="PRO_0000222400" description="Protein P1-P2">
    <location>
        <begin position="21"/>
        <end position="1062"/>
    </location>
</feature>
<feature type="chain" id="PRO_0000390907" description="Serine protease" evidence="2">
    <location>
        <begin position="205"/>
        <end position="399"/>
    </location>
</feature>
<feature type="chain" id="PRO_0000390908" description="RNA-directed RNA polymerase" evidence="2">
    <location>
        <begin position="400"/>
        <end position="1062"/>
    </location>
</feature>
<feature type="transmembrane region" description="Helical" evidence="2">
    <location>
        <begin position="121"/>
        <end position="141"/>
    </location>
</feature>
<feature type="transmembrane region" description="Helical" evidence="2">
    <location>
        <begin position="144"/>
        <end position="164"/>
    </location>
</feature>
<feature type="transmembrane region" description="Helical" evidence="2">
    <location>
        <begin position="172"/>
        <end position="192"/>
    </location>
</feature>
<feature type="domain" description="Peptidase S39" evidence="4">
    <location>
        <begin position="207"/>
        <end position="399"/>
    </location>
</feature>
<feature type="domain" description="RdRp catalytic" evidence="3">
    <location>
        <begin position="859"/>
        <end position="974"/>
    </location>
</feature>
<feature type="region of interest" description="Disordered" evidence="5">
    <location>
        <begin position="456"/>
        <end position="557"/>
    </location>
</feature>
<feature type="compositionally biased region" description="Polar residues" evidence="5">
    <location>
        <begin position="463"/>
        <end position="484"/>
    </location>
</feature>
<feature type="compositionally biased region" description="Basic residues" evidence="5">
    <location>
        <begin position="497"/>
        <end position="511"/>
    </location>
</feature>
<feature type="compositionally biased region" description="Polar residues" evidence="5">
    <location>
        <begin position="541"/>
        <end position="553"/>
    </location>
</feature>
<feature type="active site" description="For protease activity" evidence="4">
    <location>
        <position position="255"/>
    </location>
</feature>
<feature type="active site" description="For protease activity" evidence="4">
    <location>
        <position position="286"/>
    </location>
</feature>
<feature type="active site" description="For protease activity" evidence="4">
    <location>
        <position position="354"/>
    </location>
</feature>
<feature type="site" description="Cleavage; by viral serine protease" evidence="2">
    <location>
        <begin position="204"/>
        <end position="205"/>
    </location>
</feature>
<feature type="site" description="Cleavage; by viral serine protease" evidence="1">
    <location>
        <begin position="399"/>
        <end position="400"/>
    </location>
</feature>
<evidence type="ECO:0000250" key="1"/>
<evidence type="ECO:0000255" key="2"/>
<evidence type="ECO:0000255" key="3">
    <source>
        <dbReference type="PROSITE-ProRule" id="PRU00539"/>
    </source>
</evidence>
<evidence type="ECO:0000255" key="4">
    <source>
        <dbReference type="PROSITE-ProRule" id="PRU01216"/>
    </source>
</evidence>
<evidence type="ECO:0000256" key="5">
    <source>
        <dbReference type="SAM" id="MobiDB-lite"/>
    </source>
</evidence>
<evidence type="ECO:0000305" key="6"/>
<organism>
    <name type="scientific">Potato leafroll virus (strain Potato/Netherlands/Wageningen/1989)</name>
    <name type="common">PLrV</name>
    <dbReference type="NCBI Taxonomy" id="12048"/>
    <lineage>
        <taxon>Viruses</taxon>
        <taxon>Riboviria</taxon>
        <taxon>Orthornavirae</taxon>
        <taxon>Pisuviricota</taxon>
        <taxon>Pisoniviricetes</taxon>
        <taxon>Sobelivirales</taxon>
        <taxon>Solemoviridae</taxon>
        <taxon>Polerovirus</taxon>
        <taxon>Potato leafroll virus</taxon>
    </lineage>
</organism>
<name>RDRP_PLRVW</name>
<keyword id="KW-0378">Hydrolase</keyword>
<keyword id="KW-0472">Membrane</keyword>
<keyword id="KW-0511">Multifunctional enzyme</keyword>
<keyword id="KW-0547">Nucleotide-binding</keyword>
<keyword id="KW-0548">Nucleotidyltransferase</keyword>
<keyword id="KW-0645">Protease</keyword>
<keyword id="KW-0688">Ribosomal frameshifting</keyword>
<keyword id="KW-0696">RNA-directed RNA polymerase</keyword>
<keyword id="KW-0720">Serine protease</keyword>
<keyword id="KW-0732">Signal</keyword>
<keyword id="KW-0808">Transferase</keyword>
<keyword id="KW-0812">Transmembrane</keyword>
<keyword id="KW-1133">Transmembrane helix</keyword>
<keyword id="KW-0693">Viral RNA replication</keyword>